<protein>
    <recommendedName>
        <fullName>Lysozyme</fullName>
        <ecNumber>3.2.1.17</ecNumber>
    </recommendedName>
    <alternativeName>
        <fullName>Endolysin</fullName>
    </alternativeName>
    <alternativeName>
        <fullName>Lysis protein</fullName>
    </alternativeName>
    <alternativeName>
        <fullName>Muramidase L3</fullName>
    </alternativeName>
</protein>
<sequence length="20" mass="2094">IAIQGGXGYLXQPGDGYKYA</sequence>
<reference evidence="3" key="1">
    <citation type="submission" date="2007-05" db="UniProtKB">
        <title>Identification of extracellular bacteriolytic enzymes from Lysobacter sp. XL1.</title>
        <authorList>
            <person name="Muranova T.A."/>
            <person name="Stepnaya O.A."/>
            <person name="Tsfasman I.M."/>
            <person name="Kulaev I.S."/>
        </authorList>
    </citation>
    <scope>PROTEIN SEQUENCE</scope>
    <scope>FUNCTION</scope>
    <scope>CATALYTIC ACTIVITY</scope>
    <scope>BIOPHYSICOCHEMICAL PROPERTIES</scope>
    <scope>SUBUNIT</scope>
    <scope>SUBCELLULAR LOCATION</scope>
</reference>
<accession>P85152</accession>
<feature type="chain" id="PRO_0000291306" description="Lysozyme">
    <location>
        <begin position="1"/>
        <end position="20" status="greater than"/>
    </location>
</feature>
<feature type="non-terminal residue" evidence="2">
    <location>
        <position position="20"/>
    </location>
</feature>
<keyword id="KW-0044">Antibiotic</keyword>
<keyword id="KW-0929">Antimicrobial</keyword>
<keyword id="KW-0081">Bacteriolytic enzyme</keyword>
<keyword id="KW-0903">Direct protein sequencing</keyword>
<keyword id="KW-0326">Glycosidase</keyword>
<keyword id="KW-0378">Hydrolase</keyword>
<keyword id="KW-0964">Secreted</keyword>
<evidence type="ECO:0000269" key="1">
    <source ref="1"/>
</evidence>
<evidence type="ECO:0000303" key="2">
    <source ref="1"/>
</evidence>
<evidence type="ECO:0000305" key="3"/>
<name>LYS1_LYSSX</name>
<proteinExistence type="evidence at protein level"/>
<dbReference type="EC" id="3.2.1.17"/>
<dbReference type="GO" id="GO:0005576">
    <property type="term" value="C:extracellular region"/>
    <property type="evidence" value="ECO:0007669"/>
    <property type="project" value="UniProtKB-SubCell"/>
</dbReference>
<dbReference type="GO" id="GO:0003796">
    <property type="term" value="F:lysozyme activity"/>
    <property type="evidence" value="ECO:0007669"/>
    <property type="project" value="UniProtKB-EC"/>
</dbReference>
<dbReference type="GO" id="GO:0042742">
    <property type="term" value="P:defense response to bacterium"/>
    <property type="evidence" value="ECO:0007669"/>
    <property type="project" value="UniProtKB-KW"/>
</dbReference>
<dbReference type="GO" id="GO:0031640">
    <property type="term" value="P:killing of cells of another organism"/>
    <property type="evidence" value="ECO:0007669"/>
    <property type="project" value="UniProtKB-KW"/>
</dbReference>
<organism>
    <name type="scientific">Lysobacter sp. (strain XL1)</name>
    <dbReference type="NCBI Taxonomy" id="186334"/>
    <lineage>
        <taxon>Bacteria</taxon>
        <taxon>Pseudomonadati</taxon>
        <taxon>Pseudomonadota</taxon>
        <taxon>Gammaproteobacteria</taxon>
        <taxon>Lysobacterales</taxon>
        <taxon>Lysobacteraceae</taxon>
        <taxon>Lysobacter</taxon>
    </lineage>
</organism>
<comment type="function">
    <text evidence="1">Has bacteriolytic activity.</text>
</comment>
<comment type="catalytic activity">
    <reaction evidence="1">
        <text>Hydrolysis of (1-&gt;4)-beta-linkages between N-acetylmuramic acid and N-acetyl-D-glucosamine residues in a peptidoglycan and between N-acetyl-D-glucosamine residues in chitodextrins.</text>
        <dbReference type="EC" id="3.2.1.17"/>
    </reaction>
</comment>
<comment type="biophysicochemical properties">
    <phDependence>
        <text evidence="1">Optimum pH is 8.0.</text>
    </phDependence>
    <temperatureDependence>
        <text evidence="1">Optimum temperature is 60 degrees Celsius.</text>
    </temperatureDependence>
</comment>
<comment type="subunit">
    <text evidence="1">Monomer.</text>
</comment>
<comment type="subcellular location">
    <subcellularLocation>
        <location evidence="1">Secreted</location>
    </subcellularLocation>
</comment>